<name>Y647_HAEIN</name>
<protein>
    <recommendedName>
        <fullName>Uncharacterized protein HI_0647</fullName>
    </recommendedName>
</protein>
<feature type="chain" id="PRO_0000202034" description="Uncharacterized protein HI_0647">
    <location>
        <begin position="1"/>
        <end position="238"/>
    </location>
</feature>
<feature type="transmembrane region" description="Helical" evidence="1">
    <location>
        <begin position="16"/>
        <end position="36"/>
    </location>
</feature>
<feature type="transmembrane region" description="Helical" evidence="1">
    <location>
        <begin position="44"/>
        <end position="64"/>
    </location>
</feature>
<feature type="transmembrane region" description="Helical" evidence="1">
    <location>
        <begin position="81"/>
        <end position="101"/>
    </location>
</feature>
<feature type="transmembrane region" description="Helical" evidence="1">
    <location>
        <begin position="123"/>
        <end position="143"/>
    </location>
</feature>
<evidence type="ECO:0000255" key="1"/>
<evidence type="ECO:0000305" key="2"/>
<dbReference type="EMBL" id="L42023">
    <property type="protein sequence ID" value="AAC22307.1"/>
    <property type="molecule type" value="Genomic_DNA"/>
</dbReference>
<dbReference type="PIR" id="A64156">
    <property type="entry name" value="A64156"/>
</dbReference>
<dbReference type="RefSeq" id="NP_438807.1">
    <property type="nucleotide sequence ID" value="NC_000907.1"/>
</dbReference>
<dbReference type="SMR" id="Q57424"/>
<dbReference type="STRING" id="71421.HI_0647"/>
<dbReference type="EnsemblBacteria" id="AAC22307">
    <property type="protein sequence ID" value="AAC22307"/>
    <property type="gene ID" value="HI_0647"/>
</dbReference>
<dbReference type="KEGG" id="hin:HI_0647"/>
<dbReference type="PATRIC" id="fig|71421.8.peg.676"/>
<dbReference type="eggNOG" id="COG1285">
    <property type="taxonomic scope" value="Bacteria"/>
</dbReference>
<dbReference type="HOGENOM" id="CLU_079292_0_1_6"/>
<dbReference type="OrthoDB" id="9811198at2"/>
<dbReference type="PhylomeDB" id="Q57424"/>
<dbReference type="BioCyc" id="HINF71421:G1GJ1-682-MONOMER"/>
<dbReference type="Proteomes" id="UP000000579">
    <property type="component" value="Chromosome"/>
</dbReference>
<dbReference type="GO" id="GO:0005886">
    <property type="term" value="C:plasma membrane"/>
    <property type="evidence" value="ECO:0007669"/>
    <property type="project" value="UniProtKB-SubCell"/>
</dbReference>
<dbReference type="InterPro" id="IPR045865">
    <property type="entry name" value="ACT-like_dom_sf"/>
</dbReference>
<dbReference type="InterPro" id="IPR003416">
    <property type="entry name" value="MgtC/SapB/SrpB/YhiD_fam"/>
</dbReference>
<dbReference type="InterPro" id="IPR049177">
    <property type="entry name" value="MgtC_SapB_SrpB_YhiD_N"/>
</dbReference>
<dbReference type="PANTHER" id="PTHR33778:SF1">
    <property type="entry name" value="MAGNESIUM TRANSPORTER YHID-RELATED"/>
    <property type="match status" value="1"/>
</dbReference>
<dbReference type="PANTHER" id="PTHR33778">
    <property type="entry name" value="PROTEIN MGTC"/>
    <property type="match status" value="1"/>
</dbReference>
<dbReference type="Pfam" id="PF02308">
    <property type="entry name" value="MgtC"/>
    <property type="match status" value="1"/>
</dbReference>
<dbReference type="PRINTS" id="PR01837">
    <property type="entry name" value="MGTCSAPBPROT"/>
</dbReference>
<dbReference type="SUPFAM" id="SSF55021">
    <property type="entry name" value="ACT-like"/>
    <property type="match status" value="1"/>
</dbReference>
<reference key="1">
    <citation type="journal article" date="1995" name="Science">
        <title>Whole-genome random sequencing and assembly of Haemophilus influenzae Rd.</title>
        <authorList>
            <person name="Fleischmann R.D."/>
            <person name="Adams M.D."/>
            <person name="White O."/>
            <person name="Clayton R.A."/>
            <person name="Kirkness E.F."/>
            <person name="Kerlavage A.R."/>
            <person name="Bult C.J."/>
            <person name="Tomb J.-F."/>
            <person name="Dougherty B.A."/>
            <person name="Merrick J.M."/>
            <person name="McKenney K."/>
            <person name="Sutton G.G."/>
            <person name="FitzHugh W."/>
            <person name="Fields C.A."/>
            <person name="Gocayne J.D."/>
            <person name="Scott J.D."/>
            <person name="Shirley R."/>
            <person name="Liu L.-I."/>
            <person name="Glodek A."/>
            <person name="Kelley J.M."/>
            <person name="Weidman J.F."/>
            <person name="Phillips C.A."/>
            <person name="Spriggs T."/>
            <person name="Hedblom E."/>
            <person name="Cotton M.D."/>
            <person name="Utterback T.R."/>
            <person name="Hanna M.C."/>
            <person name="Nguyen D.T."/>
            <person name="Saudek D.M."/>
            <person name="Brandon R.C."/>
            <person name="Fine L.D."/>
            <person name="Fritchman J.L."/>
            <person name="Fuhrmann J.L."/>
            <person name="Geoghagen N.S.M."/>
            <person name="Gnehm C.L."/>
            <person name="McDonald L.A."/>
            <person name="Small K.V."/>
            <person name="Fraser C.M."/>
            <person name="Smith H.O."/>
            <person name="Venter J.C."/>
        </authorList>
    </citation>
    <scope>NUCLEOTIDE SEQUENCE [LARGE SCALE GENOMIC DNA]</scope>
    <source>
        <strain>ATCC 51907 / DSM 11121 / KW20 / Rd</strain>
    </source>
</reference>
<accession>Q57424</accession>
<accession>O05028</accession>
<keyword id="KW-0997">Cell inner membrane</keyword>
<keyword id="KW-1003">Cell membrane</keyword>
<keyword id="KW-0472">Membrane</keyword>
<keyword id="KW-1185">Reference proteome</keyword>
<keyword id="KW-0812">Transmembrane</keyword>
<keyword id="KW-1133">Transmembrane helix</keyword>
<organism>
    <name type="scientific">Haemophilus influenzae (strain ATCC 51907 / DSM 11121 / KW20 / Rd)</name>
    <dbReference type="NCBI Taxonomy" id="71421"/>
    <lineage>
        <taxon>Bacteria</taxon>
        <taxon>Pseudomonadati</taxon>
        <taxon>Pseudomonadota</taxon>
        <taxon>Gammaproteobacteria</taxon>
        <taxon>Pasteurellales</taxon>
        <taxon>Pasteurellaceae</taxon>
        <taxon>Haemophilus</taxon>
    </lineage>
</organism>
<proteinExistence type="inferred from homology"/>
<comment type="subcellular location">
    <subcellularLocation>
        <location evidence="2">Cell inner membrane</location>
        <topology evidence="2">Multi-pass membrane protein</topology>
    </subcellularLocation>
</comment>
<comment type="similarity">
    <text evidence="2">Belongs to the MgtC/SapB family.</text>
</comment>
<sequence>MENSSLLLTALFNPDHLIIFSKMLLAMVLGSVIGLERELKRKPVGVKTCAIIAVTTCVLTIVSIQAAEHYAQVSENIRTDPMRLAAQVISGIGFLGAGVILHKKNDAISGLTTAAIIWASAGIGIAAGAGFVFDAVIATVMILVSIRLSPLVQRWVHRKSQRRRTKFNILVNDAESIGKVTQLLVNNQYRIEHIQVKDQSSGEVRLQIRCFSIDSTMLKDAYALLKAEDGVISVEVDN</sequence>
<gene>
    <name type="ordered locus">HI_0647</name>
</gene>